<proteinExistence type="inferred from homology"/>
<keyword id="KW-0067">ATP-binding</keyword>
<keyword id="KW-0133">Cell shape</keyword>
<keyword id="KW-0961">Cell wall biogenesis/degradation</keyword>
<keyword id="KW-0963">Cytoplasm</keyword>
<keyword id="KW-0436">Ligase</keyword>
<keyword id="KW-0460">Magnesium</keyword>
<keyword id="KW-0464">Manganese</keyword>
<keyword id="KW-0479">Metal-binding</keyword>
<keyword id="KW-0547">Nucleotide-binding</keyword>
<keyword id="KW-0573">Peptidoglycan synthesis</keyword>
<protein>
    <recommendedName>
        <fullName evidence="2">D-alanine--D-alanine ligase</fullName>
        <ecNumber evidence="2">6.3.2.4</ecNumber>
    </recommendedName>
    <alternativeName>
        <fullName evidence="2">D-Ala-D-Ala ligase</fullName>
    </alternativeName>
    <alternativeName>
        <fullName evidence="2">D-alanylalanine synthetase</fullName>
    </alternativeName>
</protein>
<evidence type="ECO:0000250" key="1"/>
<evidence type="ECO:0000255" key="2">
    <source>
        <dbReference type="HAMAP-Rule" id="MF_00047"/>
    </source>
</evidence>
<dbReference type="EC" id="6.3.2.4" evidence="2"/>
<dbReference type="EMBL" id="AP011115">
    <property type="protein sequence ID" value="BAH54805.1"/>
    <property type="molecule type" value="Genomic_DNA"/>
</dbReference>
<dbReference type="RefSeq" id="WP_015890251.1">
    <property type="nucleotide sequence ID" value="NC_012522.1"/>
</dbReference>
<dbReference type="SMR" id="C1B2N8"/>
<dbReference type="STRING" id="632772.ROP_65580"/>
<dbReference type="KEGG" id="rop:ROP_65580"/>
<dbReference type="PATRIC" id="fig|632772.20.peg.6844"/>
<dbReference type="HOGENOM" id="CLU_039268_0_1_11"/>
<dbReference type="OrthoDB" id="9813261at2"/>
<dbReference type="UniPathway" id="UPA00219"/>
<dbReference type="Proteomes" id="UP000002212">
    <property type="component" value="Chromosome"/>
</dbReference>
<dbReference type="GO" id="GO:0005829">
    <property type="term" value="C:cytosol"/>
    <property type="evidence" value="ECO:0007669"/>
    <property type="project" value="TreeGrafter"/>
</dbReference>
<dbReference type="GO" id="GO:0005524">
    <property type="term" value="F:ATP binding"/>
    <property type="evidence" value="ECO:0007669"/>
    <property type="project" value="UniProtKB-KW"/>
</dbReference>
<dbReference type="GO" id="GO:0008716">
    <property type="term" value="F:D-alanine-D-alanine ligase activity"/>
    <property type="evidence" value="ECO:0007669"/>
    <property type="project" value="UniProtKB-UniRule"/>
</dbReference>
<dbReference type="GO" id="GO:0046872">
    <property type="term" value="F:metal ion binding"/>
    <property type="evidence" value="ECO:0007669"/>
    <property type="project" value="UniProtKB-KW"/>
</dbReference>
<dbReference type="GO" id="GO:0071555">
    <property type="term" value="P:cell wall organization"/>
    <property type="evidence" value="ECO:0007669"/>
    <property type="project" value="UniProtKB-KW"/>
</dbReference>
<dbReference type="GO" id="GO:0009252">
    <property type="term" value="P:peptidoglycan biosynthetic process"/>
    <property type="evidence" value="ECO:0007669"/>
    <property type="project" value="UniProtKB-UniRule"/>
</dbReference>
<dbReference type="GO" id="GO:0008360">
    <property type="term" value="P:regulation of cell shape"/>
    <property type="evidence" value="ECO:0007669"/>
    <property type="project" value="UniProtKB-KW"/>
</dbReference>
<dbReference type="FunFam" id="3.30.470.20:FF:000008">
    <property type="entry name" value="D-alanine--D-alanine ligase"/>
    <property type="match status" value="1"/>
</dbReference>
<dbReference type="Gene3D" id="3.40.50.20">
    <property type="match status" value="1"/>
</dbReference>
<dbReference type="Gene3D" id="3.30.1490.20">
    <property type="entry name" value="ATP-grasp fold, A domain"/>
    <property type="match status" value="1"/>
</dbReference>
<dbReference type="Gene3D" id="3.30.470.20">
    <property type="entry name" value="ATP-grasp fold, B domain"/>
    <property type="match status" value="1"/>
</dbReference>
<dbReference type="HAMAP" id="MF_00047">
    <property type="entry name" value="Dala_Dala_lig"/>
    <property type="match status" value="1"/>
</dbReference>
<dbReference type="InterPro" id="IPR011761">
    <property type="entry name" value="ATP-grasp"/>
</dbReference>
<dbReference type="InterPro" id="IPR013815">
    <property type="entry name" value="ATP_grasp_subdomain_1"/>
</dbReference>
<dbReference type="InterPro" id="IPR000291">
    <property type="entry name" value="D-Ala_lig_Van_CS"/>
</dbReference>
<dbReference type="InterPro" id="IPR005905">
    <property type="entry name" value="D_ala_D_ala"/>
</dbReference>
<dbReference type="InterPro" id="IPR011095">
    <property type="entry name" value="Dala_Dala_lig_C"/>
</dbReference>
<dbReference type="InterPro" id="IPR011127">
    <property type="entry name" value="Dala_Dala_lig_N"/>
</dbReference>
<dbReference type="InterPro" id="IPR016185">
    <property type="entry name" value="PreATP-grasp_dom_sf"/>
</dbReference>
<dbReference type="NCBIfam" id="TIGR01205">
    <property type="entry name" value="D_ala_D_alaTIGR"/>
    <property type="match status" value="1"/>
</dbReference>
<dbReference type="NCBIfam" id="NF002528">
    <property type="entry name" value="PRK01966.1-4"/>
    <property type="match status" value="1"/>
</dbReference>
<dbReference type="PANTHER" id="PTHR23132">
    <property type="entry name" value="D-ALANINE--D-ALANINE LIGASE"/>
    <property type="match status" value="1"/>
</dbReference>
<dbReference type="PANTHER" id="PTHR23132:SF25">
    <property type="entry name" value="D-ALANINE--D-ALANINE LIGASE A"/>
    <property type="match status" value="1"/>
</dbReference>
<dbReference type="Pfam" id="PF07478">
    <property type="entry name" value="Dala_Dala_lig_C"/>
    <property type="match status" value="1"/>
</dbReference>
<dbReference type="Pfam" id="PF01820">
    <property type="entry name" value="Dala_Dala_lig_N"/>
    <property type="match status" value="1"/>
</dbReference>
<dbReference type="PIRSF" id="PIRSF039102">
    <property type="entry name" value="Ddl/VanB"/>
    <property type="match status" value="1"/>
</dbReference>
<dbReference type="SUPFAM" id="SSF56059">
    <property type="entry name" value="Glutathione synthetase ATP-binding domain-like"/>
    <property type="match status" value="1"/>
</dbReference>
<dbReference type="SUPFAM" id="SSF52440">
    <property type="entry name" value="PreATP-grasp domain"/>
    <property type="match status" value="1"/>
</dbReference>
<dbReference type="PROSITE" id="PS50975">
    <property type="entry name" value="ATP_GRASP"/>
    <property type="match status" value="1"/>
</dbReference>
<dbReference type="PROSITE" id="PS00843">
    <property type="entry name" value="DALA_DALA_LIGASE_1"/>
    <property type="match status" value="1"/>
</dbReference>
<dbReference type="PROSITE" id="PS00844">
    <property type="entry name" value="DALA_DALA_LIGASE_2"/>
    <property type="match status" value="1"/>
</dbReference>
<name>DDL_RHOOB</name>
<organism>
    <name type="scientific">Rhodococcus opacus (strain B4)</name>
    <dbReference type="NCBI Taxonomy" id="632772"/>
    <lineage>
        <taxon>Bacteria</taxon>
        <taxon>Bacillati</taxon>
        <taxon>Actinomycetota</taxon>
        <taxon>Actinomycetes</taxon>
        <taxon>Mycobacteriales</taxon>
        <taxon>Nocardiaceae</taxon>
        <taxon>Rhodococcus</taxon>
    </lineage>
</organism>
<sequence>MSKPRTRVAVIFGGRSNEHSVSCVSAGSVLRNLDPERYEVVPIGITTEGSWVLGSTDPESLSIRGRSLPSVDADGSALALTADPTRSGDLVALDDGEAGKILASVDVVFPVLHGAYGEDGTIQGLLELAGVPYVGPGVLASAAGMDKEFTKKLLAAEGLPIGFQVVLRPGTATLTDEQRSRLHLPVFVKPARGGSSIGITRVAEWAALDDAIAHARRHDPKVIVESGIAGREVECGVLEFPDGDVRASVIAEIRMPEGADDDEAFYDFDSKYLDDVCEFDVPAKLEDSVSDEIRALAVRAFSALDCQGLARVDFFVTEDGPVINEINTMPGFTSISMYPRMWDAVGVDYGTLVSTLVDTALARGTGLR</sequence>
<accession>C1B2N8</accession>
<gene>
    <name evidence="2" type="primary">ddl</name>
    <name type="ordered locus">ROP_65580</name>
</gene>
<reference key="1">
    <citation type="submission" date="2009-03" db="EMBL/GenBank/DDBJ databases">
        <title>Comparison of the complete genome sequences of Rhodococcus erythropolis PR4 and Rhodococcus opacus B4.</title>
        <authorList>
            <person name="Takarada H."/>
            <person name="Sekine M."/>
            <person name="Hosoyama A."/>
            <person name="Yamada R."/>
            <person name="Fujisawa T."/>
            <person name="Omata S."/>
            <person name="Shimizu A."/>
            <person name="Tsukatani N."/>
            <person name="Tanikawa S."/>
            <person name="Fujita N."/>
            <person name="Harayama S."/>
        </authorList>
    </citation>
    <scope>NUCLEOTIDE SEQUENCE [LARGE SCALE GENOMIC DNA]</scope>
    <source>
        <strain>B4</strain>
    </source>
</reference>
<comment type="function">
    <text evidence="2">Cell wall formation.</text>
</comment>
<comment type="catalytic activity">
    <reaction evidence="2">
        <text>2 D-alanine + ATP = D-alanyl-D-alanine + ADP + phosphate + H(+)</text>
        <dbReference type="Rhea" id="RHEA:11224"/>
        <dbReference type="ChEBI" id="CHEBI:15378"/>
        <dbReference type="ChEBI" id="CHEBI:30616"/>
        <dbReference type="ChEBI" id="CHEBI:43474"/>
        <dbReference type="ChEBI" id="CHEBI:57416"/>
        <dbReference type="ChEBI" id="CHEBI:57822"/>
        <dbReference type="ChEBI" id="CHEBI:456216"/>
        <dbReference type="EC" id="6.3.2.4"/>
    </reaction>
</comment>
<comment type="cofactor">
    <cofactor evidence="1">
        <name>Mg(2+)</name>
        <dbReference type="ChEBI" id="CHEBI:18420"/>
    </cofactor>
    <cofactor evidence="1">
        <name>Mn(2+)</name>
        <dbReference type="ChEBI" id="CHEBI:29035"/>
    </cofactor>
    <text evidence="1">Binds 2 magnesium or manganese ions per subunit.</text>
</comment>
<comment type="pathway">
    <text evidence="2">Cell wall biogenesis; peptidoglycan biosynthesis.</text>
</comment>
<comment type="subcellular location">
    <subcellularLocation>
        <location evidence="2">Cytoplasm</location>
    </subcellularLocation>
</comment>
<comment type="similarity">
    <text evidence="2">Belongs to the D-alanine--D-alanine ligase family.</text>
</comment>
<feature type="chain" id="PRO_1000189743" description="D-alanine--D-alanine ligase">
    <location>
        <begin position="1"/>
        <end position="368"/>
    </location>
</feature>
<feature type="domain" description="ATP-grasp" evidence="2">
    <location>
        <begin position="151"/>
        <end position="358"/>
    </location>
</feature>
<feature type="binding site" evidence="2">
    <location>
        <begin position="179"/>
        <end position="234"/>
    </location>
    <ligand>
        <name>ATP</name>
        <dbReference type="ChEBI" id="CHEBI:30616"/>
    </ligand>
</feature>
<feature type="binding site" evidence="2">
    <location>
        <position position="313"/>
    </location>
    <ligand>
        <name>Mg(2+)</name>
        <dbReference type="ChEBI" id="CHEBI:18420"/>
        <label>1</label>
    </ligand>
</feature>
<feature type="binding site" evidence="2">
    <location>
        <position position="325"/>
    </location>
    <ligand>
        <name>Mg(2+)</name>
        <dbReference type="ChEBI" id="CHEBI:18420"/>
        <label>1</label>
    </ligand>
</feature>
<feature type="binding site" evidence="2">
    <location>
        <position position="325"/>
    </location>
    <ligand>
        <name>Mg(2+)</name>
        <dbReference type="ChEBI" id="CHEBI:18420"/>
        <label>2</label>
    </ligand>
</feature>
<feature type="binding site" evidence="2">
    <location>
        <position position="327"/>
    </location>
    <ligand>
        <name>Mg(2+)</name>
        <dbReference type="ChEBI" id="CHEBI:18420"/>
        <label>2</label>
    </ligand>
</feature>